<sequence>MALIRLGFGRQHFCLLKRRSFLMLKLAALVFAVVLFCEFLIYYLVIFRCDWPEVKTPASDSGQKTLKAMFLADTHLLGEVRGHWLDKLRREWQMERAFQTALRLLQPEVVFILGDIFDEGKWSSSQAWADDVERFQKIFRHPRHVQLKVVAGNHDIGFHYQMNAYKIKRFEKVFSPERLFSWKGINFVMVNSVALEGDGCHICSEAEAELIEISRKLNCSRKQERRSGPCPDPQLLPASAPVLLQHFPLYRRSDANCSGEDAAPLEERGIPFKERYDVLSQEASQQLLWWLRPRLILSGHTHSACEVLHGAEVPEISVPSFSWRNRNNPSFIMGSMTPTEYALAKCYLPYEDTVLATYCVAAGLLVVLILVHSELLPSPFLFGWNLLRKFKT</sequence>
<evidence type="ECO:0000250" key="1">
    <source>
        <dbReference type="UniProtKB" id="Q53F39"/>
    </source>
</evidence>
<evidence type="ECO:0000255" key="2"/>
<evidence type="ECO:0000305" key="3"/>
<dbReference type="EC" id="3.1.-.-" evidence="1"/>
<dbReference type="EMBL" id="GL194190">
    <property type="protein sequence ID" value="EFB23081.1"/>
    <property type="molecule type" value="Genomic_DNA"/>
</dbReference>
<dbReference type="STRING" id="9646.ENSAMEP00000008605"/>
<dbReference type="eggNOG" id="KOG3662">
    <property type="taxonomic scope" value="Eukaryota"/>
</dbReference>
<dbReference type="HOGENOM" id="CLU_047168_2_0_1"/>
<dbReference type="InParanoid" id="D2I2M6"/>
<dbReference type="OMA" id="LHCMKYP"/>
<dbReference type="Proteomes" id="UP000008912">
    <property type="component" value="Unassembled WGS sequence"/>
</dbReference>
<dbReference type="GO" id="GO:0070971">
    <property type="term" value="C:endoplasmic reticulum exit site"/>
    <property type="evidence" value="ECO:0000250"/>
    <property type="project" value="UniProtKB"/>
</dbReference>
<dbReference type="GO" id="GO:0033116">
    <property type="term" value="C:endoplasmic reticulum-Golgi intermediate compartment membrane"/>
    <property type="evidence" value="ECO:0007669"/>
    <property type="project" value="UniProtKB-SubCell"/>
</dbReference>
<dbReference type="GO" id="GO:0005794">
    <property type="term" value="C:Golgi apparatus"/>
    <property type="evidence" value="ECO:0007669"/>
    <property type="project" value="UniProtKB-SubCell"/>
</dbReference>
<dbReference type="GO" id="GO:0062050">
    <property type="term" value="F:GPI-mannose ethanolamine phosphate phosphodiesterase activity"/>
    <property type="evidence" value="ECO:0000250"/>
    <property type="project" value="UniProtKB"/>
</dbReference>
<dbReference type="GO" id="GO:0030145">
    <property type="term" value="F:manganese ion binding"/>
    <property type="evidence" value="ECO:0000250"/>
    <property type="project" value="UniProtKB"/>
</dbReference>
<dbReference type="GO" id="GO:0006888">
    <property type="term" value="P:endoplasmic reticulum to Golgi vesicle-mediated transport"/>
    <property type="evidence" value="ECO:0000250"/>
    <property type="project" value="UniProtKB"/>
</dbReference>
<dbReference type="GO" id="GO:0006506">
    <property type="term" value="P:GPI anchor biosynthetic process"/>
    <property type="evidence" value="ECO:0000250"/>
    <property type="project" value="UniProtKB"/>
</dbReference>
<dbReference type="CDD" id="cd08165">
    <property type="entry name" value="MPP_MPPE1"/>
    <property type="match status" value="1"/>
</dbReference>
<dbReference type="FunFam" id="3.60.21.10:FF:000022">
    <property type="entry name" value="Putative metallophosphoesterase 1"/>
    <property type="match status" value="1"/>
</dbReference>
<dbReference type="Gene3D" id="3.60.21.10">
    <property type="match status" value="1"/>
</dbReference>
<dbReference type="InterPro" id="IPR004843">
    <property type="entry name" value="Calcineurin-like_PHP_ApaH"/>
</dbReference>
<dbReference type="InterPro" id="IPR029052">
    <property type="entry name" value="Metallo-depent_PP-like"/>
</dbReference>
<dbReference type="InterPro" id="IPR039541">
    <property type="entry name" value="MPP_MPPE1"/>
</dbReference>
<dbReference type="InterPro" id="IPR033308">
    <property type="entry name" value="PGAP5/Cdc1/Ted1"/>
</dbReference>
<dbReference type="PANTHER" id="PTHR13315">
    <property type="entry name" value="METALLO PHOSPHOESTERASE RELATED"/>
    <property type="match status" value="1"/>
</dbReference>
<dbReference type="PANTHER" id="PTHR13315:SF0">
    <property type="entry name" value="METALLOPHOSPHOESTERASE 1"/>
    <property type="match status" value="1"/>
</dbReference>
<dbReference type="Pfam" id="PF00149">
    <property type="entry name" value="Metallophos"/>
    <property type="match status" value="1"/>
</dbReference>
<dbReference type="SUPFAM" id="SSF56300">
    <property type="entry name" value="Metallo-dependent phosphatases"/>
    <property type="match status" value="1"/>
</dbReference>
<proteinExistence type="inferred from homology"/>
<protein>
    <recommendedName>
        <fullName evidence="1">Metallophosphoesterase 1</fullName>
        <ecNumber evidence="1">3.1.-.-</ecNumber>
    </recommendedName>
    <alternativeName>
        <fullName>Post-GPI attachment to proteins factor 5</fullName>
    </alternativeName>
</protein>
<gene>
    <name evidence="1" type="primary">MPPE1</name>
    <name evidence="1" type="synonym">PGAP5</name>
    <name type="ORF">PANDA_019658</name>
</gene>
<name>MPPE1_AILME</name>
<organism>
    <name type="scientific">Ailuropoda melanoleuca</name>
    <name type="common">Giant panda</name>
    <dbReference type="NCBI Taxonomy" id="9646"/>
    <lineage>
        <taxon>Eukaryota</taxon>
        <taxon>Metazoa</taxon>
        <taxon>Chordata</taxon>
        <taxon>Craniata</taxon>
        <taxon>Vertebrata</taxon>
        <taxon>Euteleostomi</taxon>
        <taxon>Mammalia</taxon>
        <taxon>Eutheria</taxon>
        <taxon>Laurasiatheria</taxon>
        <taxon>Carnivora</taxon>
        <taxon>Caniformia</taxon>
        <taxon>Ursidae</taxon>
        <taxon>Ailuropoda</taxon>
    </lineage>
</organism>
<reference key="1">
    <citation type="journal article" date="2010" name="Nature">
        <title>The sequence and de novo assembly of the giant panda genome.</title>
        <authorList>
            <person name="Li R."/>
            <person name="Fan W."/>
            <person name="Tian G."/>
            <person name="Zhu H."/>
            <person name="He L."/>
            <person name="Cai J."/>
            <person name="Huang Q."/>
            <person name="Cai Q."/>
            <person name="Li B."/>
            <person name="Bai Y."/>
            <person name="Zhang Z."/>
            <person name="Zhang Y."/>
            <person name="Wang W."/>
            <person name="Li J."/>
            <person name="Wei F."/>
            <person name="Li H."/>
            <person name="Jian M."/>
            <person name="Li J."/>
            <person name="Zhang Z."/>
            <person name="Nielsen R."/>
            <person name="Li D."/>
            <person name="Gu W."/>
            <person name="Yang Z."/>
            <person name="Xuan Z."/>
            <person name="Ryder O.A."/>
            <person name="Leung F.C."/>
            <person name="Zhou Y."/>
            <person name="Cao J."/>
            <person name="Sun X."/>
            <person name="Fu Y."/>
            <person name="Fang X."/>
            <person name="Guo X."/>
            <person name="Wang B."/>
            <person name="Hou R."/>
            <person name="Shen F."/>
            <person name="Mu B."/>
            <person name="Ni P."/>
            <person name="Lin R."/>
            <person name="Qian W."/>
            <person name="Wang G."/>
            <person name="Yu C."/>
            <person name="Nie W."/>
            <person name="Wang J."/>
            <person name="Wu Z."/>
            <person name="Liang H."/>
            <person name="Min J."/>
            <person name="Wu Q."/>
            <person name="Cheng S."/>
            <person name="Ruan J."/>
            <person name="Wang M."/>
            <person name="Shi Z."/>
            <person name="Wen M."/>
            <person name="Liu B."/>
            <person name="Ren X."/>
            <person name="Zheng H."/>
            <person name="Dong D."/>
            <person name="Cook K."/>
            <person name="Shan G."/>
            <person name="Zhang H."/>
            <person name="Kosiol C."/>
            <person name="Xie X."/>
            <person name="Lu Z."/>
            <person name="Zheng H."/>
            <person name="Li Y."/>
            <person name="Steiner C.C."/>
            <person name="Lam T.T."/>
            <person name="Lin S."/>
            <person name="Zhang Q."/>
            <person name="Li G."/>
            <person name="Tian J."/>
            <person name="Gong T."/>
            <person name="Liu H."/>
            <person name="Zhang D."/>
            <person name="Fang L."/>
            <person name="Ye C."/>
            <person name="Zhang J."/>
            <person name="Hu W."/>
            <person name="Xu A."/>
            <person name="Ren Y."/>
            <person name="Zhang G."/>
            <person name="Bruford M.W."/>
            <person name="Li Q."/>
            <person name="Ma L."/>
            <person name="Guo Y."/>
            <person name="An N."/>
            <person name="Hu Y."/>
            <person name="Zheng Y."/>
            <person name="Shi Y."/>
            <person name="Li Z."/>
            <person name="Liu Q."/>
            <person name="Chen Y."/>
            <person name="Zhao J."/>
            <person name="Qu N."/>
            <person name="Zhao S."/>
            <person name="Tian F."/>
            <person name="Wang X."/>
            <person name="Wang H."/>
            <person name="Xu L."/>
            <person name="Liu X."/>
            <person name="Vinar T."/>
            <person name="Wang Y."/>
            <person name="Lam T.W."/>
            <person name="Yiu S.M."/>
            <person name="Liu S."/>
            <person name="Zhang H."/>
            <person name="Li D."/>
            <person name="Huang Y."/>
            <person name="Wang X."/>
            <person name="Yang G."/>
            <person name="Jiang Z."/>
            <person name="Wang J."/>
            <person name="Qin N."/>
            <person name="Li L."/>
            <person name="Li J."/>
            <person name="Bolund L."/>
            <person name="Kristiansen K."/>
            <person name="Wong G.K."/>
            <person name="Olson M."/>
            <person name="Zhang X."/>
            <person name="Li S."/>
            <person name="Yang H."/>
            <person name="Wang J."/>
            <person name="Wang J."/>
        </authorList>
    </citation>
    <scope>NUCLEOTIDE SEQUENCE [LARGE SCALE GENOMIC DNA]</scope>
</reference>
<keyword id="KW-0931">ER-Golgi transport</keyword>
<keyword id="KW-0337">GPI-anchor biosynthesis</keyword>
<keyword id="KW-0378">Hydrolase</keyword>
<keyword id="KW-0464">Manganese</keyword>
<keyword id="KW-0472">Membrane</keyword>
<keyword id="KW-0479">Metal-binding</keyword>
<keyword id="KW-1185">Reference proteome</keyword>
<keyword id="KW-0812">Transmembrane</keyword>
<keyword id="KW-1133">Transmembrane helix</keyword>
<keyword id="KW-0813">Transport</keyword>
<accession>D2I2M6</accession>
<comment type="function">
    <text evidence="1">Metallophosphoesterase that catalyzes the removal of a side-chain ethanolamine-phosphate (EtNP) from the second mannose of the GPI-anchor protein intermediate. Participates in the glycan remodeling steps of GPI-anchor maturation to allow an efficient transport of GPI-anchor proteins from the endoplasmic reticulum to the Golgi.</text>
</comment>
<comment type="cofactor">
    <cofactor evidence="1">
        <name>Mn(2+)</name>
        <dbReference type="ChEBI" id="CHEBI:29035"/>
    </cofactor>
    <text evidence="1">Binds 2 manganese ions per subunit.</text>
</comment>
<comment type="subunit">
    <text evidence="1">Interacts with GPI-anchor proteins (via the GPI portion). Interacts with TMED10.</text>
</comment>
<comment type="subcellular location">
    <subcellularLocation>
        <location evidence="1">Endoplasmic reticulum-Golgi intermediate compartment membrane</location>
        <topology evidence="2">Multi-pass membrane protein</topology>
    </subcellularLocation>
    <text evidence="1">Also localizes to endoplasmic reticulum exit site.</text>
</comment>
<comment type="similarity">
    <text evidence="3">Belongs to the metallophosphoesterase superfamily. MPPE1 family.</text>
</comment>
<feature type="chain" id="PRO_0000395803" description="Metallophosphoesterase 1">
    <location>
        <begin position="1"/>
        <end position="392"/>
    </location>
</feature>
<feature type="transmembrane region" description="Helical" evidence="2">
    <location>
        <begin position="25"/>
        <end position="45"/>
    </location>
</feature>
<feature type="transmembrane region" description="Helical" evidence="2">
    <location>
        <begin position="352"/>
        <end position="372"/>
    </location>
</feature>
<feature type="binding site" evidence="1">
    <location>
        <position position="73"/>
    </location>
    <ligand>
        <name>a divalent metal cation</name>
        <dbReference type="ChEBI" id="CHEBI:60240"/>
        <label>2</label>
    </ligand>
</feature>
<feature type="binding site" evidence="1">
    <location>
        <position position="115"/>
    </location>
    <ligand>
        <name>a divalent metal cation</name>
        <dbReference type="ChEBI" id="CHEBI:60240"/>
        <label>1</label>
    </ligand>
</feature>
<feature type="binding site" evidence="1">
    <location>
        <position position="115"/>
    </location>
    <ligand>
        <name>a divalent metal cation</name>
        <dbReference type="ChEBI" id="CHEBI:60240"/>
        <label>2</label>
    </ligand>
</feature>
<feature type="binding site" evidence="1">
    <location>
        <position position="153"/>
    </location>
    <ligand>
        <name>a divalent metal cation</name>
        <dbReference type="ChEBI" id="CHEBI:60240"/>
        <label>1</label>
    </ligand>
</feature>
<feature type="binding site" evidence="1">
    <location>
        <position position="246"/>
    </location>
    <ligand>
        <name>a divalent metal cation</name>
        <dbReference type="ChEBI" id="CHEBI:60240"/>
        <label>1</label>
    </ligand>
</feature>
<feature type="binding site" evidence="1">
    <location>
        <position position="246"/>
    </location>
    <ligand>
        <name>a divalent metal cation</name>
        <dbReference type="ChEBI" id="CHEBI:60240"/>
        <label>2</label>
    </ligand>
</feature>
<feature type="binding site" evidence="1">
    <location>
        <position position="300"/>
    </location>
    <ligand>
        <name>a divalent metal cation</name>
        <dbReference type="ChEBI" id="CHEBI:60240"/>
        <label>1</label>
    </ligand>
</feature>
<feature type="binding site" evidence="1">
    <location>
        <position position="302"/>
    </location>
    <ligand>
        <name>a divalent metal cation</name>
        <dbReference type="ChEBI" id="CHEBI:60240"/>
        <label>2</label>
    </ligand>
</feature>